<organism>
    <name type="scientific">Escherichia coli (strain K12)</name>
    <dbReference type="NCBI Taxonomy" id="83333"/>
    <lineage>
        <taxon>Bacteria</taxon>
        <taxon>Pseudomonadati</taxon>
        <taxon>Pseudomonadota</taxon>
        <taxon>Gammaproteobacteria</taxon>
        <taxon>Enterobacterales</taxon>
        <taxon>Enterobacteriaceae</taxon>
        <taxon>Escherichia</taxon>
    </lineage>
</organism>
<comment type="function">
    <text evidence="4 5 6">Involved in cell wall peptidoglycan recycling (PubMed:19309146). Specifically cleaves the amide bond between the lactyl group of N-acetylmuramic acid and the alpha-amino group of the L-alanine in degradation products containing an anhydro N-acetylmuramyl moiety (PubMed:19309146). Is also involved in beta-lactamase induction (PubMed:2607970, PubMed:2691840).</text>
</comment>
<comment type="catalytic activity">
    <reaction evidence="4">
        <text>Hydrolyzes the link between N-acetylmuramoyl residues and L-amino acid residues in certain cell-wall glycopeptides.</text>
        <dbReference type="EC" id="3.5.1.28"/>
    </reaction>
</comment>
<comment type="cofactor">
    <cofactor evidence="2">
        <name>Zn(2+)</name>
        <dbReference type="ChEBI" id="CHEBI:29105"/>
    </cofactor>
    <text evidence="2">Zn(2+) is required for amidase activity.</text>
</comment>
<comment type="biophysicochemical properties">
    <kinetics>
        <KM evidence="4">1760 uM for N-acetyl-beta-D-glucosamine-(1--&gt;4)-1,6-anhydro-N-acetyl-beta-D-muramyl-L-Ala-gamma-D-Glu-meso-DAP-D-Ala-D-Ala</KM>
        <text evidence="4">kcat is 0.4 sec(-1).</text>
    </kinetics>
</comment>
<comment type="subcellular location">
    <subcellularLocation>
        <location evidence="8">Cytoplasm</location>
    </subcellularLocation>
</comment>
<comment type="induction">
    <text>Inactivation of AmpD results in AmpR-dependent hyperinduction and AmpD affects beta-lactam susceptibility in the absence of cloned C.freundii amp genes suggesting a linkage between AmpD and peptidoglycan synthesis.</text>
</comment>
<comment type="similarity">
    <text evidence="7">Belongs to the N-acetylmuramoyl-L-alanine amidase 2 family.</text>
</comment>
<reference key="1">
    <citation type="journal article" date="1989" name="Mol. Microbiol.">
        <title>Signalling proteins in enterobacterial AmpC beta-lactamase regulation.</title>
        <authorList>
            <person name="Lindquist S."/>
            <person name="Galleni M."/>
            <person name="Lindberg F."/>
            <person name="Normark S."/>
        </authorList>
    </citation>
    <scope>NUCLEOTIDE SEQUENCE [GENOMIC DNA]</scope>
    <scope>FUNCTION</scope>
    <source>
        <strain>K12</strain>
    </source>
</reference>
<reference key="2">
    <citation type="journal article" date="1989" name="Mol. Microbiol.">
        <title>Regulation of enterobacterial cephalosporinase production: the role of a membrane-bound sensory transducer.</title>
        <authorList>
            <person name="Honore N."/>
            <person name="Nicolas M.H."/>
            <person name="Cole S.T."/>
        </authorList>
    </citation>
    <scope>NUCLEOTIDE SEQUENCE [GENOMIC DNA]</scope>
    <scope>FUNCTION</scope>
    <source>
        <strain>K12</strain>
    </source>
</reference>
<reference key="3">
    <citation type="journal article" date="1997" name="Science">
        <title>The complete genome sequence of Escherichia coli K-12.</title>
        <authorList>
            <person name="Blattner F.R."/>
            <person name="Plunkett G. III"/>
            <person name="Bloch C.A."/>
            <person name="Perna N.T."/>
            <person name="Burland V."/>
            <person name="Riley M."/>
            <person name="Collado-Vides J."/>
            <person name="Glasner J.D."/>
            <person name="Rode C.K."/>
            <person name="Mayhew G.F."/>
            <person name="Gregor J."/>
            <person name="Davis N.W."/>
            <person name="Kirkpatrick H.A."/>
            <person name="Goeden M.A."/>
            <person name="Rose D.J."/>
            <person name="Mau B."/>
            <person name="Shao Y."/>
        </authorList>
    </citation>
    <scope>NUCLEOTIDE SEQUENCE [LARGE SCALE GENOMIC DNA]</scope>
    <source>
        <strain>K12 / MG1655 / ATCC 47076</strain>
    </source>
</reference>
<reference key="4">
    <citation type="journal article" date="2006" name="Mol. Syst. Biol.">
        <title>Highly accurate genome sequences of Escherichia coli K-12 strains MG1655 and W3110.</title>
        <authorList>
            <person name="Hayashi K."/>
            <person name="Morooka N."/>
            <person name="Yamamoto Y."/>
            <person name="Fujita K."/>
            <person name="Isono K."/>
            <person name="Choi S."/>
            <person name="Ohtsubo E."/>
            <person name="Baba T."/>
            <person name="Wanner B.L."/>
            <person name="Mori H."/>
            <person name="Horiuchi T."/>
        </authorList>
    </citation>
    <scope>NUCLEOTIDE SEQUENCE [LARGE SCALE GENOMIC DNA]</scope>
    <source>
        <strain>K12 / W3110 / ATCC 27325 / DSM 5911</strain>
    </source>
</reference>
<reference key="5">
    <citation type="journal article" date="1994" name="Gene">
        <title>Escherichia coli contains a set of genes homologous to those involved in protein secretion, DNA uptake and the assembly of type-4 fimbriae in other bacteria.</title>
        <authorList>
            <person name="Whitchurch C.B."/>
            <person name="Mattick J.S."/>
        </authorList>
    </citation>
    <scope>NUCLEOTIDE SEQUENCE [GENOMIC DNA] OF 1-92</scope>
    <source>
        <strain>K12</strain>
    </source>
</reference>
<reference key="6">
    <citation type="journal article" date="2009" name="J. Am. Chem. Soc.">
        <title>Total synthesis of N-acetylglucosamine-1,6-anhydro-N-acetylmuramylpentapeptide and evaluation of its turnover by AmpD from Escherichia coli.</title>
        <authorList>
            <person name="Hesek D."/>
            <person name="Lee M."/>
            <person name="Zhang W."/>
            <person name="Noll B.C."/>
            <person name="Mobashery S."/>
        </authorList>
    </citation>
    <scope>FUNCTION</scope>
    <scope>CATALYTIC ACTIVITY</scope>
    <scope>BIOPHYSICOCHEMICAL PROPERTIES</scope>
    <scope>SUBCELLULAR LOCATION</scope>
</reference>
<name>AMPD_ECOLI</name>
<sequence length="183" mass="20536">MLLEQGWLVGARRVPSPHYDCRPDDETPTLLVVHNISLPPGEFGGPWIDALFTGTIDPQAHPFFAEIAHLRVSAHCLIRRDGEIVQYVPFDKRAWHAGVSQYQGRERCNDFSIGIELEGTDTLAYTDAQYQQLAAVTRALIDCYPDIAKNMTGHCDIAPDRKTDPGPAFDWARFRVLVSKETT</sequence>
<evidence type="ECO:0000250" key="1">
    <source>
        <dbReference type="UniProtKB" id="P75820"/>
    </source>
</evidence>
<evidence type="ECO:0000250" key="2">
    <source>
        <dbReference type="UniProtKB" id="P82974"/>
    </source>
</evidence>
<evidence type="ECO:0000255" key="3"/>
<evidence type="ECO:0000269" key="4">
    <source>
    </source>
</evidence>
<evidence type="ECO:0000269" key="5">
    <source>
    </source>
</evidence>
<evidence type="ECO:0000269" key="6">
    <source>
    </source>
</evidence>
<evidence type="ECO:0000305" key="7"/>
<evidence type="ECO:0000305" key="8">
    <source>
    </source>
</evidence>
<keyword id="KW-0961">Cell wall biogenesis/degradation</keyword>
<keyword id="KW-0963">Cytoplasm</keyword>
<keyword id="KW-0378">Hydrolase</keyword>
<keyword id="KW-0479">Metal-binding</keyword>
<keyword id="KW-1185">Reference proteome</keyword>
<keyword id="KW-0862">Zinc</keyword>
<dbReference type="EC" id="3.5.1.28" evidence="4"/>
<dbReference type="EMBL" id="X15237">
    <property type="protein sequence ID" value="CAA33314.1"/>
    <property type="molecule type" value="Genomic_DNA"/>
</dbReference>
<dbReference type="EMBL" id="U00096">
    <property type="protein sequence ID" value="AAC73221.1"/>
    <property type="molecule type" value="Genomic_DNA"/>
</dbReference>
<dbReference type="EMBL" id="AP009048">
    <property type="protein sequence ID" value="BAB96679.1"/>
    <property type="molecule type" value="Genomic_DNA"/>
</dbReference>
<dbReference type="EMBL" id="L28105">
    <property type="protein sequence ID" value="AAC36921.1"/>
    <property type="molecule type" value="Genomic_DNA"/>
</dbReference>
<dbReference type="PIR" id="S05569">
    <property type="entry name" value="S05569"/>
</dbReference>
<dbReference type="RefSeq" id="NP_414652.1">
    <property type="nucleotide sequence ID" value="NC_000913.3"/>
</dbReference>
<dbReference type="RefSeq" id="WP_000923721.1">
    <property type="nucleotide sequence ID" value="NZ_STEB01000010.1"/>
</dbReference>
<dbReference type="SMR" id="P13016"/>
<dbReference type="BioGRID" id="4261895">
    <property type="interactions" value="176"/>
</dbReference>
<dbReference type="FunCoup" id="P13016">
    <property type="interactions" value="50"/>
</dbReference>
<dbReference type="STRING" id="511145.b0110"/>
<dbReference type="jPOST" id="P13016"/>
<dbReference type="PaxDb" id="511145-b0110"/>
<dbReference type="EnsemblBacteria" id="AAC73221">
    <property type="protein sequence ID" value="AAC73221"/>
    <property type="gene ID" value="b0110"/>
</dbReference>
<dbReference type="GeneID" id="75202075"/>
<dbReference type="GeneID" id="948877"/>
<dbReference type="KEGG" id="ecj:JW0106"/>
<dbReference type="KEGG" id="eco:b0110"/>
<dbReference type="KEGG" id="ecoc:C3026_00455"/>
<dbReference type="PATRIC" id="fig|1411691.4.peg.2172"/>
<dbReference type="EchoBASE" id="EB0039"/>
<dbReference type="eggNOG" id="COG3023">
    <property type="taxonomic scope" value="Bacteria"/>
</dbReference>
<dbReference type="HOGENOM" id="CLU_049290_1_0_6"/>
<dbReference type="InParanoid" id="P13016"/>
<dbReference type="OMA" id="PFTDAQY"/>
<dbReference type="OrthoDB" id="9794842at2"/>
<dbReference type="PhylomeDB" id="P13016"/>
<dbReference type="BioCyc" id="EcoCyc:EG10041-MONOMER"/>
<dbReference type="BioCyc" id="MetaCyc:EG10041-MONOMER"/>
<dbReference type="PRO" id="PR:P13016"/>
<dbReference type="Proteomes" id="UP000000625">
    <property type="component" value="Chromosome"/>
</dbReference>
<dbReference type="GO" id="GO:0005737">
    <property type="term" value="C:cytoplasm"/>
    <property type="evidence" value="ECO:0007669"/>
    <property type="project" value="UniProtKB-SubCell"/>
</dbReference>
<dbReference type="GO" id="GO:0046872">
    <property type="term" value="F:metal ion binding"/>
    <property type="evidence" value="ECO:0007669"/>
    <property type="project" value="UniProtKB-KW"/>
</dbReference>
<dbReference type="GO" id="GO:0009392">
    <property type="term" value="F:N-acetyl-anhydromuramoyl-L-alanine amidase activity"/>
    <property type="evidence" value="ECO:0000314"/>
    <property type="project" value="EcoCyc"/>
</dbReference>
<dbReference type="GO" id="GO:0008745">
    <property type="term" value="F:N-acetylmuramoyl-L-alanine amidase activity"/>
    <property type="evidence" value="ECO:0000318"/>
    <property type="project" value="GO_Central"/>
</dbReference>
<dbReference type="GO" id="GO:0071555">
    <property type="term" value="P:cell wall organization"/>
    <property type="evidence" value="ECO:0007669"/>
    <property type="project" value="UniProtKB-KW"/>
</dbReference>
<dbReference type="GO" id="GO:0009253">
    <property type="term" value="P:peptidoglycan catabolic process"/>
    <property type="evidence" value="ECO:0000318"/>
    <property type="project" value="GO_Central"/>
</dbReference>
<dbReference type="GO" id="GO:0009254">
    <property type="term" value="P:peptidoglycan turnover"/>
    <property type="evidence" value="ECO:0000315"/>
    <property type="project" value="EcoCyc"/>
</dbReference>
<dbReference type="CDD" id="cd06583">
    <property type="entry name" value="PGRP"/>
    <property type="match status" value="1"/>
</dbReference>
<dbReference type="FunFam" id="3.40.80.10:FF:000002">
    <property type="entry name" value="1,6-anhydro-N-acetylmuramyl-L-alanine amidase"/>
    <property type="match status" value="1"/>
</dbReference>
<dbReference type="Gene3D" id="3.40.80.10">
    <property type="entry name" value="Peptidoglycan recognition protein-like"/>
    <property type="match status" value="1"/>
</dbReference>
<dbReference type="InterPro" id="IPR036505">
    <property type="entry name" value="Amidase/PGRP_sf"/>
</dbReference>
<dbReference type="InterPro" id="IPR002502">
    <property type="entry name" value="Amidase_domain"/>
</dbReference>
<dbReference type="InterPro" id="IPR051206">
    <property type="entry name" value="NAMLAA_amidase_2"/>
</dbReference>
<dbReference type="NCBIfam" id="NF008758">
    <property type="entry name" value="PRK11789.1"/>
    <property type="match status" value="1"/>
</dbReference>
<dbReference type="PANTHER" id="PTHR30417:SF4">
    <property type="entry name" value="1,6-ANHYDRO-N-ACETYLMURAMYL-L-ALANINE AMIDASE AMPD"/>
    <property type="match status" value="1"/>
</dbReference>
<dbReference type="PANTHER" id="PTHR30417">
    <property type="entry name" value="N-ACETYLMURAMOYL-L-ALANINE AMIDASE AMID"/>
    <property type="match status" value="1"/>
</dbReference>
<dbReference type="Pfam" id="PF01510">
    <property type="entry name" value="Amidase_2"/>
    <property type="match status" value="1"/>
</dbReference>
<dbReference type="SMART" id="SM00644">
    <property type="entry name" value="Ami_2"/>
    <property type="match status" value="1"/>
</dbReference>
<dbReference type="SUPFAM" id="SSF55846">
    <property type="entry name" value="N-acetylmuramoyl-L-alanine amidase-like"/>
    <property type="match status" value="1"/>
</dbReference>
<feature type="chain" id="PRO_0000164413" description="1,6-anhydro-N-acetylmuramyl-L-alanine amidase AmpD">
    <location>
        <begin position="1"/>
        <end position="183"/>
    </location>
</feature>
<feature type="domain" description="N-acetylmuramoyl-L-alanine amidase" evidence="3">
    <location>
        <begin position="30"/>
        <end position="167"/>
    </location>
</feature>
<feature type="active site" description="Proton acceptor" evidence="1">
    <location>
        <position position="116"/>
    </location>
</feature>
<feature type="binding site" evidence="2">
    <location>
        <position position="34"/>
    </location>
    <ligand>
        <name>Zn(2+)</name>
        <dbReference type="ChEBI" id="CHEBI:29105"/>
        <note>catalytic</note>
    </ligand>
</feature>
<feature type="binding site" evidence="2">
    <location>
        <position position="154"/>
    </location>
    <ligand>
        <name>Zn(2+)</name>
        <dbReference type="ChEBI" id="CHEBI:29105"/>
        <note>catalytic</note>
    </ligand>
</feature>
<feature type="binding site" evidence="2">
    <location>
        <position position="164"/>
    </location>
    <ligand>
        <name>Zn(2+)</name>
        <dbReference type="ChEBI" id="CHEBI:29105"/>
        <note>catalytic</note>
    </ligand>
</feature>
<feature type="site" description="Transition state stabilizer" evidence="1">
    <location>
        <position position="162"/>
    </location>
</feature>
<proteinExistence type="evidence at protein level"/>
<gene>
    <name type="primary">ampD</name>
    <name type="ordered locus">b0110</name>
    <name type="ordered locus">JW0106</name>
</gene>
<protein>
    <recommendedName>
        <fullName evidence="7">1,6-anhydro-N-acetylmuramyl-L-alanine amidase AmpD</fullName>
        <ecNumber evidence="4">3.5.1.28</ecNumber>
    </recommendedName>
    <alternativeName>
        <fullName evidence="7">N-acetylmuramoyl-L-alanine amidase</fullName>
    </alternativeName>
</protein>
<accession>P13016</accession>